<organism>
    <name type="scientific">Shewanella woodyi (strain ATCC 51908 / MS32)</name>
    <dbReference type="NCBI Taxonomy" id="392500"/>
    <lineage>
        <taxon>Bacteria</taxon>
        <taxon>Pseudomonadati</taxon>
        <taxon>Pseudomonadota</taxon>
        <taxon>Gammaproteobacteria</taxon>
        <taxon>Alteromonadales</taxon>
        <taxon>Shewanellaceae</taxon>
        <taxon>Shewanella</taxon>
    </lineage>
</organism>
<feature type="chain" id="PRO_1000143437" description="ATP synthase subunit alpha">
    <location>
        <begin position="1"/>
        <end position="513"/>
    </location>
</feature>
<feature type="binding site" evidence="1">
    <location>
        <begin position="169"/>
        <end position="176"/>
    </location>
    <ligand>
        <name>ATP</name>
        <dbReference type="ChEBI" id="CHEBI:30616"/>
    </ligand>
</feature>
<feature type="site" description="Required for activity" evidence="1">
    <location>
        <position position="373"/>
    </location>
</feature>
<accession>B1KQ36</accession>
<keyword id="KW-0066">ATP synthesis</keyword>
<keyword id="KW-0067">ATP-binding</keyword>
<keyword id="KW-0997">Cell inner membrane</keyword>
<keyword id="KW-1003">Cell membrane</keyword>
<keyword id="KW-0139">CF(1)</keyword>
<keyword id="KW-0375">Hydrogen ion transport</keyword>
<keyword id="KW-0406">Ion transport</keyword>
<keyword id="KW-0472">Membrane</keyword>
<keyword id="KW-0547">Nucleotide-binding</keyword>
<keyword id="KW-1185">Reference proteome</keyword>
<keyword id="KW-1278">Translocase</keyword>
<keyword id="KW-0813">Transport</keyword>
<name>ATPA_SHEWM</name>
<proteinExistence type="inferred from homology"/>
<sequence length="513" mass="55491">MQLNSTEISDLIKQRIEQFEVVSEARNEGTIVAVSDGIIRIHGLADVMQGEMIELPGNRFAIALNLERDSVGAVVMGPYASLAEGDKVKTTGRILEVPVGRGLLGRVVNTLGEPIDGKGPIDNDGFSPVEMIAPGVIERKSVDQPVQTGYKAVDSMIPIGRGQRELIIGDRQIGKTALAIDAIINQKDTGIKCVYVAVGQKASTIANVVRKLEEHGALANTIVVVATASEAAALQYLAPYSGCSMGEYFRDRGEDSLIVYDDLSKQAVAYRQISLLLKRPPGREAYPGDVFYLHSRLLERASRVNAEYVEKFTKGEVKGQTGSLTALPIIETQAGDVSAFVPTNVISITDGQIFLETDLFNSGLRPAVNPGISVSRVGGAAQTKIIKKLSGGIRSALAQYRELAAFSQFASDLDDATRAQLEHGERVTELMKQKQYAPMSVADQSVSIFSAEKGYLKSVELNKIGDFEASLLSYMNSEHADLMKTINETGNYNADIEGELKAGLDKFVETQTW</sequence>
<comment type="function">
    <text evidence="1">Produces ATP from ADP in the presence of a proton gradient across the membrane. The alpha chain is a regulatory subunit.</text>
</comment>
<comment type="catalytic activity">
    <reaction evidence="1">
        <text>ATP + H2O + 4 H(+)(in) = ADP + phosphate + 5 H(+)(out)</text>
        <dbReference type="Rhea" id="RHEA:57720"/>
        <dbReference type="ChEBI" id="CHEBI:15377"/>
        <dbReference type="ChEBI" id="CHEBI:15378"/>
        <dbReference type="ChEBI" id="CHEBI:30616"/>
        <dbReference type="ChEBI" id="CHEBI:43474"/>
        <dbReference type="ChEBI" id="CHEBI:456216"/>
        <dbReference type="EC" id="7.1.2.2"/>
    </reaction>
</comment>
<comment type="subunit">
    <text evidence="1">F-type ATPases have 2 components, CF(1) - the catalytic core - and CF(0) - the membrane proton channel. CF(1) has five subunits: alpha(3), beta(3), gamma(1), delta(1), epsilon(1). CF(0) has three main subunits: a(1), b(2) and c(9-12). The alpha and beta chains form an alternating ring which encloses part of the gamma chain. CF(1) is attached to CF(0) by a central stalk formed by the gamma and epsilon chains, while a peripheral stalk is formed by the delta and b chains.</text>
</comment>
<comment type="subcellular location">
    <subcellularLocation>
        <location evidence="1">Cell inner membrane</location>
        <topology evidence="1">Peripheral membrane protein</topology>
    </subcellularLocation>
</comment>
<comment type="similarity">
    <text evidence="1">Belongs to the ATPase alpha/beta chains family.</text>
</comment>
<gene>
    <name evidence="1" type="primary">atpA</name>
    <name type="ordered locus">Swoo_4900</name>
</gene>
<reference key="1">
    <citation type="submission" date="2008-02" db="EMBL/GenBank/DDBJ databases">
        <title>Complete sequence of Shewanella woodyi ATCC 51908.</title>
        <authorList>
            <consortium name="US DOE Joint Genome Institute"/>
            <person name="Copeland A."/>
            <person name="Lucas S."/>
            <person name="Lapidus A."/>
            <person name="Glavina del Rio T."/>
            <person name="Dalin E."/>
            <person name="Tice H."/>
            <person name="Bruce D."/>
            <person name="Goodwin L."/>
            <person name="Pitluck S."/>
            <person name="Sims D."/>
            <person name="Brettin T."/>
            <person name="Detter J.C."/>
            <person name="Han C."/>
            <person name="Kuske C.R."/>
            <person name="Schmutz J."/>
            <person name="Larimer F."/>
            <person name="Land M."/>
            <person name="Hauser L."/>
            <person name="Kyrpides N."/>
            <person name="Lykidis A."/>
            <person name="Zhao J.-S."/>
            <person name="Richardson P."/>
        </authorList>
    </citation>
    <scope>NUCLEOTIDE SEQUENCE [LARGE SCALE GENOMIC DNA]</scope>
    <source>
        <strain>ATCC 51908 / MS32</strain>
    </source>
</reference>
<dbReference type="EC" id="7.1.2.2" evidence="1"/>
<dbReference type="EMBL" id="CP000961">
    <property type="protein sequence ID" value="ACA89149.1"/>
    <property type="molecule type" value="Genomic_DNA"/>
</dbReference>
<dbReference type="RefSeq" id="WP_012327466.1">
    <property type="nucleotide sequence ID" value="NC_010506.1"/>
</dbReference>
<dbReference type="SMR" id="B1KQ36"/>
<dbReference type="STRING" id="392500.Swoo_4900"/>
<dbReference type="KEGG" id="swd:Swoo_4900"/>
<dbReference type="eggNOG" id="COG0056">
    <property type="taxonomic scope" value="Bacteria"/>
</dbReference>
<dbReference type="HOGENOM" id="CLU_010091_2_1_6"/>
<dbReference type="Proteomes" id="UP000002168">
    <property type="component" value="Chromosome"/>
</dbReference>
<dbReference type="GO" id="GO:0005886">
    <property type="term" value="C:plasma membrane"/>
    <property type="evidence" value="ECO:0007669"/>
    <property type="project" value="UniProtKB-SubCell"/>
</dbReference>
<dbReference type="GO" id="GO:0045259">
    <property type="term" value="C:proton-transporting ATP synthase complex"/>
    <property type="evidence" value="ECO:0007669"/>
    <property type="project" value="UniProtKB-KW"/>
</dbReference>
<dbReference type="GO" id="GO:0043531">
    <property type="term" value="F:ADP binding"/>
    <property type="evidence" value="ECO:0007669"/>
    <property type="project" value="TreeGrafter"/>
</dbReference>
<dbReference type="GO" id="GO:0005524">
    <property type="term" value="F:ATP binding"/>
    <property type="evidence" value="ECO:0007669"/>
    <property type="project" value="UniProtKB-UniRule"/>
</dbReference>
<dbReference type="GO" id="GO:0046933">
    <property type="term" value="F:proton-transporting ATP synthase activity, rotational mechanism"/>
    <property type="evidence" value="ECO:0007669"/>
    <property type="project" value="UniProtKB-UniRule"/>
</dbReference>
<dbReference type="CDD" id="cd18113">
    <property type="entry name" value="ATP-synt_F1_alpha_C"/>
    <property type="match status" value="1"/>
</dbReference>
<dbReference type="CDD" id="cd18116">
    <property type="entry name" value="ATP-synt_F1_alpha_N"/>
    <property type="match status" value="1"/>
</dbReference>
<dbReference type="CDD" id="cd01132">
    <property type="entry name" value="F1-ATPase_alpha_CD"/>
    <property type="match status" value="1"/>
</dbReference>
<dbReference type="FunFam" id="1.20.150.20:FF:000001">
    <property type="entry name" value="ATP synthase subunit alpha"/>
    <property type="match status" value="1"/>
</dbReference>
<dbReference type="FunFam" id="2.40.30.20:FF:000001">
    <property type="entry name" value="ATP synthase subunit alpha"/>
    <property type="match status" value="1"/>
</dbReference>
<dbReference type="FunFam" id="3.40.50.300:FF:000002">
    <property type="entry name" value="ATP synthase subunit alpha"/>
    <property type="match status" value="1"/>
</dbReference>
<dbReference type="Gene3D" id="2.40.30.20">
    <property type="match status" value="1"/>
</dbReference>
<dbReference type="Gene3D" id="1.20.150.20">
    <property type="entry name" value="ATP synthase alpha/beta chain, C-terminal domain"/>
    <property type="match status" value="1"/>
</dbReference>
<dbReference type="Gene3D" id="3.40.50.300">
    <property type="entry name" value="P-loop containing nucleotide triphosphate hydrolases"/>
    <property type="match status" value="1"/>
</dbReference>
<dbReference type="HAMAP" id="MF_01346">
    <property type="entry name" value="ATP_synth_alpha_bact"/>
    <property type="match status" value="1"/>
</dbReference>
<dbReference type="InterPro" id="IPR023366">
    <property type="entry name" value="ATP_synth_asu-like_sf"/>
</dbReference>
<dbReference type="InterPro" id="IPR000793">
    <property type="entry name" value="ATP_synth_asu_C"/>
</dbReference>
<dbReference type="InterPro" id="IPR038376">
    <property type="entry name" value="ATP_synth_asu_C_sf"/>
</dbReference>
<dbReference type="InterPro" id="IPR033732">
    <property type="entry name" value="ATP_synth_F1_a_nt-bd_dom"/>
</dbReference>
<dbReference type="InterPro" id="IPR005294">
    <property type="entry name" value="ATP_synth_F1_asu"/>
</dbReference>
<dbReference type="InterPro" id="IPR020003">
    <property type="entry name" value="ATPase_a/bsu_AS"/>
</dbReference>
<dbReference type="InterPro" id="IPR004100">
    <property type="entry name" value="ATPase_F1/V1/A1_a/bsu_N"/>
</dbReference>
<dbReference type="InterPro" id="IPR036121">
    <property type="entry name" value="ATPase_F1/V1/A1_a/bsu_N_sf"/>
</dbReference>
<dbReference type="InterPro" id="IPR000194">
    <property type="entry name" value="ATPase_F1/V1/A1_a/bsu_nucl-bd"/>
</dbReference>
<dbReference type="InterPro" id="IPR027417">
    <property type="entry name" value="P-loop_NTPase"/>
</dbReference>
<dbReference type="NCBIfam" id="TIGR00962">
    <property type="entry name" value="atpA"/>
    <property type="match status" value="1"/>
</dbReference>
<dbReference type="NCBIfam" id="NF009884">
    <property type="entry name" value="PRK13343.1"/>
    <property type="match status" value="1"/>
</dbReference>
<dbReference type="PANTHER" id="PTHR48082">
    <property type="entry name" value="ATP SYNTHASE SUBUNIT ALPHA, MITOCHONDRIAL"/>
    <property type="match status" value="1"/>
</dbReference>
<dbReference type="PANTHER" id="PTHR48082:SF2">
    <property type="entry name" value="ATP SYNTHASE SUBUNIT ALPHA, MITOCHONDRIAL"/>
    <property type="match status" value="1"/>
</dbReference>
<dbReference type="Pfam" id="PF00006">
    <property type="entry name" value="ATP-synt_ab"/>
    <property type="match status" value="1"/>
</dbReference>
<dbReference type="Pfam" id="PF00306">
    <property type="entry name" value="ATP-synt_ab_C"/>
    <property type="match status" value="1"/>
</dbReference>
<dbReference type="Pfam" id="PF02874">
    <property type="entry name" value="ATP-synt_ab_N"/>
    <property type="match status" value="1"/>
</dbReference>
<dbReference type="SUPFAM" id="SSF47917">
    <property type="entry name" value="C-terminal domain of alpha and beta subunits of F1 ATP synthase"/>
    <property type="match status" value="1"/>
</dbReference>
<dbReference type="SUPFAM" id="SSF50615">
    <property type="entry name" value="N-terminal domain of alpha and beta subunits of F1 ATP synthase"/>
    <property type="match status" value="1"/>
</dbReference>
<dbReference type="SUPFAM" id="SSF52540">
    <property type="entry name" value="P-loop containing nucleoside triphosphate hydrolases"/>
    <property type="match status" value="1"/>
</dbReference>
<dbReference type="PROSITE" id="PS00152">
    <property type="entry name" value="ATPASE_ALPHA_BETA"/>
    <property type="match status" value="1"/>
</dbReference>
<evidence type="ECO:0000255" key="1">
    <source>
        <dbReference type="HAMAP-Rule" id="MF_01346"/>
    </source>
</evidence>
<protein>
    <recommendedName>
        <fullName evidence="1">ATP synthase subunit alpha</fullName>
        <ecNumber evidence="1">7.1.2.2</ecNumber>
    </recommendedName>
    <alternativeName>
        <fullName evidence="1">ATP synthase F1 sector subunit alpha</fullName>
    </alternativeName>
    <alternativeName>
        <fullName evidence="1">F-ATPase subunit alpha</fullName>
    </alternativeName>
</protein>